<name>CT361_CONVR</name>
<organism>
    <name type="scientific">Conus virgo</name>
    <name type="common">Virgin cone</name>
    <dbReference type="NCBI Taxonomy" id="89427"/>
    <lineage>
        <taxon>Eukaryota</taxon>
        <taxon>Metazoa</taxon>
        <taxon>Spiralia</taxon>
        <taxon>Lophotrochozoa</taxon>
        <taxon>Mollusca</taxon>
        <taxon>Gastropoda</taxon>
        <taxon>Caenogastropoda</taxon>
        <taxon>Neogastropoda</taxon>
        <taxon>Conoidea</taxon>
        <taxon>Conidae</taxon>
        <taxon>Conus</taxon>
        <taxon>Virgiconus</taxon>
    </lineage>
</organism>
<protein>
    <recommendedName>
        <fullName evidence="3">Conotoxin Vi1361</fullName>
    </recommendedName>
    <alternativeName>
        <fullName evidence="4">Conotoxin Vi1360</fullName>
    </alternativeName>
</protein>
<sequence length="12" mass="1384">QCCPTMPECCRI</sequence>
<comment type="subcellular location">
    <subcellularLocation>
        <location evidence="1 2">Secreted</location>
    </subcellularLocation>
</comment>
<comment type="tissue specificity">
    <text evidence="6 7">Expressed by the venom duct.</text>
</comment>
<comment type="domain">
    <text evidence="5">The cysteine framework is V (CC-CC).</text>
</comment>
<comment type="mass spectrometry" mass="1360.6" method="Electrospray" evidence="1"/>
<comment type="similarity">
    <text evidence="5">Belongs to the conotoxin T superfamily.</text>
</comment>
<evidence type="ECO:0000269" key="1">
    <source>
    </source>
</evidence>
<evidence type="ECO:0000269" key="2">
    <source>
    </source>
</evidence>
<evidence type="ECO:0000303" key="3">
    <source>
    </source>
</evidence>
<evidence type="ECO:0000303" key="4">
    <source>
    </source>
</evidence>
<evidence type="ECO:0000305" key="5"/>
<evidence type="ECO:0000305" key="6">
    <source>
    </source>
</evidence>
<evidence type="ECO:0000305" key="7">
    <source>
    </source>
</evidence>
<dbReference type="ConoServer" id="2788">
    <property type="toxin name" value="Vi1361"/>
</dbReference>
<dbReference type="GO" id="GO:0005576">
    <property type="term" value="C:extracellular region"/>
    <property type="evidence" value="ECO:0007669"/>
    <property type="project" value="UniProtKB-SubCell"/>
</dbReference>
<dbReference type="GO" id="GO:0090729">
    <property type="term" value="F:toxin activity"/>
    <property type="evidence" value="ECO:0007669"/>
    <property type="project" value="UniProtKB-KW"/>
</dbReference>
<feature type="peptide" id="PRO_0000315455" description="Conotoxin Vi1361" evidence="1 2">
    <location>
        <begin position="1"/>
        <end position="12"/>
    </location>
</feature>
<feature type="modified residue" description="Pyrrolidone carboxylic acid" evidence="1 2">
    <location>
        <position position="1"/>
    </location>
</feature>
<feature type="modified residue" description="Isoleucine amide" evidence="1 2">
    <location>
        <position position="12"/>
    </location>
</feature>
<feature type="disulfide bond" evidence="2">
    <location>
        <begin position="2"/>
        <end position="9"/>
    </location>
</feature>
<feature type="disulfide bond" evidence="2">
    <location>
        <begin position="3"/>
        <end position="10"/>
    </location>
</feature>
<accession>P0C642</accession>
<proteinExistence type="evidence at protein level"/>
<reference key="1">
    <citation type="journal article" date="2007" name="J. Am. Soc. Mass Spectrom.">
        <title>Sequencing of T-superfamily conotoxins from Conus virgo: pyroglutamic acid identification and disulfide arrangement by MALDI mass spectrometry.</title>
        <authorList>
            <person name="Mandal A.K."/>
            <person name="Ramasamy M.R.S."/>
            <person name="Sabareesh V."/>
            <person name="Openshaw M.E."/>
            <person name="Krishnan K.S."/>
            <person name="Balaram P."/>
        </authorList>
    </citation>
    <scope>PROTEIN SEQUENCE</scope>
    <scope>PYROGLUTAMATE FORMATION AT GLN-1</scope>
    <scope>AMIDATION AT ILE-12</scope>
    <scope>DISULFIDE BONDS</scope>
    <scope>MASS SPECTROMETRY</scope>
    <scope>SUBCELLULAR LOCATION</scope>
    <source>
        <tissue>Venom</tissue>
    </source>
</reference>
<reference key="2">
    <citation type="journal article" date="2010" name="Anal. Chem.">
        <title>Disulfide bond assignments by mass spectrometry of native natural peptides: cysteine pairing in disulfide bonded conotoxins.</title>
        <authorList>
            <person name="Gupta K."/>
            <person name="Kumar M."/>
            <person name="Balaram P."/>
        </authorList>
    </citation>
    <scope>PROTEIN SEQUENCE</scope>
    <scope>DISULFIDE BONDS</scope>
    <scope>PYROGLUTAMATE FORMATION AT GLN-1</scope>
    <scope>AMIDATION AT ILE-12</scope>
    <scope>IDENTIFICATION BY MASS SPECTROMETRY</scope>
    <scope>SUBCELLULAR LOCATION</scope>
    <source>
        <tissue>Venom</tissue>
    </source>
</reference>
<keyword id="KW-0027">Amidation</keyword>
<keyword id="KW-0903">Direct protein sequencing</keyword>
<keyword id="KW-1015">Disulfide bond</keyword>
<keyword id="KW-0873">Pyrrolidone carboxylic acid</keyword>
<keyword id="KW-0964">Secreted</keyword>
<keyword id="KW-0800">Toxin</keyword>